<sequence>MKKTKIVCTIGPKTESEEMLAKMLDAGMNVMRLNFSHGDYAEHGQRIQNLRNVMSKTGKTAAILLDTKGPEIRTMKLEGGNDVSLKAGQTFTFTTDKSVIGNSEMVAVTYEGFTTDLSVGNTVLVDDGLIGMEVTAIEGNKVICKVLNNGDLGENKGVNLPGVSIALPALAEKDKQDLIFGCEQGVDFVAASFIRKRSDVIEIREHLKAHGGENIHIISKIENQEGLNNFDEILEASDGIMVARGDLGVEIPVEEVIFAQKMMIEKCIRARKVVITATQMLDSMIKNPRPTRAEAGDVANAILDGTDAVMLSGESAKGKYPLEAVSIMATICERTDRVMNSRLEFNNDNRKLRITEAVCRGAVETAEKLDAPLIVVATQGGKSARAVRKYFPDATILALTTNEKTAHQLVLSKGVVPQLVKEITSTDDFYRLGKELALQSGLAHKGDVVVMVSGALVPSGTTNTASVHVL</sequence>
<feature type="chain" id="PRO_0000112070" description="Pyruvate kinase I">
    <location>
        <begin position="1"/>
        <end position="470"/>
    </location>
</feature>
<feature type="binding site" evidence="1">
    <location>
        <position position="32"/>
    </location>
    <ligand>
        <name>substrate</name>
    </ligand>
</feature>
<feature type="binding site" evidence="2">
    <location>
        <begin position="34"/>
        <end position="37"/>
    </location>
    <ligand>
        <name>ATP</name>
        <dbReference type="ChEBI" id="CHEBI:30616"/>
    </ligand>
</feature>
<feature type="binding site" evidence="1">
    <location>
        <position position="34"/>
    </location>
    <ligand>
        <name>K(+)</name>
        <dbReference type="ChEBI" id="CHEBI:29103"/>
    </ligand>
</feature>
<feature type="binding site" evidence="1">
    <location>
        <position position="36"/>
    </location>
    <ligand>
        <name>K(+)</name>
        <dbReference type="ChEBI" id="CHEBI:29103"/>
    </ligand>
</feature>
<feature type="binding site" evidence="1">
    <location>
        <position position="66"/>
    </location>
    <ligand>
        <name>K(+)</name>
        <dbReference type="ChEBI" id="CHEBI:29103"/>
    </ligand>
</feature>
<feature type="binding site" evidence="1">
    <location>
        <position position="67"/>
    </location>
    <ligand>
        <name>K(+)</name>
        <dbReference type="ChEBI" id="CHEBI:29103"/>
    </ligand>
</feature>
<feature type="binding site" evidence="2">
    <location>
        <position position="73"/>
    </location>
    <ligand>
        <name>ATP</name>
        <dbReference type="ChEBI" id="CHEBI:30616"/>
    </ligand>
</feature>
<feature type="binding site" evidence="2">
    <location>
        <position position="156"/>
    </location>
    <ligand>
        <name>ATP</name>
        <dbReference type="ChEBI" id="CHEBI:30616"/>
    </ligand>
</feature>
<feature type="binding site" evidence="1">
    <location>
        <position position="222"/>
    </location>
    <ligand>
        <name>Mg(2+)</name>
        <dbReference type="ChEBI" id="CHEBI:18420"/>
    </ligand>
</feature>
<feature type="binding site" evidence="1">
    <location>
        <position position="245"/>
    </location>
    <ligand>
        <name>substrate</name>
    </ligand>
</feature>
<feature type="binding site" evidence="1">
    <location>
        <position position="246"/>
    </location>
    <ligand>
        <name>Mg(2+)</name>
        <dbReference type="ChEBI" id="CHEBI:18420"/>
    </ligand>
</feature>
<feature type="binding site" evidence="1">
    <location>
        <position position="246"/>
    </location>
    <ligand>
        <name>substrate</name>
    </ligand>
</feature>
<feature type="binding site" evidence="1">
    <location>
        <position position="278"/>
    </location>
    <ligand>
        <name>substrate</name>
    </ligand>
</feature>
<feature type="site" description="Transition state stabilizer" evidence="1">
    <location>
        <position position="220"/>
    </location>
</feature>
<feature type="modified residue" description="N6-acetyllysine" evidence="1">
    <location>
        <position position="76"/>
    </location>
</feature>
<feature type="modified residue" description="N6-acetyllysine" evidence="1">
    <location>
        <position position="319"/>
    </location>
</feature>
<reference key="1">
    <citation type="journal article" date="2001" name="Nature">
        <title>Genome sequence of enterohaemorrhagic Escherichia coli O157:H7.</title>
        <authorList>
            <person name="Perna N.T."/>
            <person name="Plunkett G. III"/>
            <person name="Burland V."/>
            <person name="Mau B."/>
            <person name="Glasner J.D."/>
            <person name="Rose D.J."/>
            <person name="Mayhew G.F."/>
            <person name="Evans P.S."/>
            <person name="Gregor J."/>
            <person name="Kirkpatrick H.A."/>
            <person name="Posfai G."/>
            <person name="Hackett J."/>
            <person name="Klink S."/>
            <person name="Boutin A."/>
            <person name="Shao Y."/>
            <person name="Miller L."/>
            <person name="Grotbeck E.J."/>
            <person name="Davis N.W."/>
            <person name="Lim A."/>
            <person name="Dimalanta E.T."/>
            <person name="Potamousis K."/>
            <person name="Apodaca J."/>
            <person name="Anantharaman T.S."/>
            <person name="Lin J."/>
            <person name="Yen G."/>
            <person name="Schwartz D.C."/>
            <person name="Welch R.A."/>
            <person name="Blattner F.R."/>
        </authorList>
    </citation>
    <scope>NUCLEOTIDE SEQUENCE [LARGE SCALE GENOMIC DNA]</scope>
    <source>
        <strain>O157:H7 / EDL933 / ATCC 700927 / EHEC</strain>
    </source>
</reference>
<reference key="2">
    <citation type="journal article" date="2001" name="DNA Res.">
        <title>Complete genome sequence of enterohemorrhagic Escherichia coli O157:H7 and genomic comparison with a laboratory strain K-12.</title>
        <authorList>
            <person name="Hayashi T."/>
            <person name="Makino K."/>
            <person name="Ohnishi M."/>
            <person name="Kurokawa K."/>
            <person name="Ishii K."/>
            <person name="Yokoyama K."/>
            <person name="Han C.-G."/>
            <person name="Ohtsubo E."/>
            <person name="Nakayama K."/>
            <person name="Murata T."/>
            <person name="Tanaka M."/>
            <person name="Tobe T."/>
            <person name="Iida T."/>
            <person name="Takami H."/>
            <person name="Honda T."/>
            <person name="Sasakawa C."/>
            <person name="Ogasawara N."/>
            <person name="Yasunaga T."/>
            <person name="Kuhara S."/>
            <person name="Shiba T."/>
            <person name="Hattori M."/>
            <person name="Shinagawa H."/>
        </authorList>
    </citation>
    <scope>NUCLEOTIDE SEQUENCE [LARGE SCALE GENOMIC DNA]</scope>
    <source>
        <strain>O157:H7 / Sakai / RIMD 0509952 / EHEC</strain>
    </source>
</reference>
<gene>
    <name type="primary">pykF</name>
    <name type="ordered locus">Z2704</name>
    <name type="ordered locus">ECs2383</name>
</gene>
<protein>
    <recommendedName>
        <fullName>Pyruvate kinase I</fullName>
        <ecNumber>2.7.1.40</ecNumber>
    </recommendedName>
    <alternativeName>
        <fullName>PK-1</fullName>
    </alternativeName>
</protein>
<evidence type="ECO:0000250" key="1"/>
<evidence type="ECO:0000250" key="2">
    <source>
        <dbReference type="UniProtKB" id="P14618"/>
    </source>
</evidence>
<evidence type="ECO:0000305" key="3"/>
<accession>P0AD62</accession>
<accession>P14178</accession>
<accession>P76921</accession>
<accession>P78165</accession>
<accession>P78231</accession>
<name>KPYK1_ECO57</name>
<proteinExistence type="inferred from homology"/>
<dbReference type="EC" id="2.7.1.40"/>
<dbReference type="EMBL" id="AE005174">
    <property type="protein sequence ID" value="AAG56663.1"/>
    <property type="molecule type" value="Genomic_DNA"/>
</dbReference>
<dbReference type="EMBL" id="BA000007">
    <property type="protein sequence ID" value="BAB35806.1"/>
    <property type="molecule type" value="Genomic_DNA"/>
</dbReference>
<dbReference type="PIR" id="C85775">
    <property type="entry name" value="C85775"/>
</dbReference>
<dbReference type="PIR" id="G90926">
    <property type="entry name" value="G90926"/>
</dbReference>
<dbReference type="RefSeq" id="NP_310410.1">
    <property type="nucleotide sequence ID" value="NC_002695.1"/>
</dbReference>
<dbReference type="RefSeq" id="WP_001295403.1">
    <property type="nucleotide sequence ID" value="NZ_VOAI01000007.1"/>
</dbReference>
<dbReference type="SMR" id="P0AD62"/>
<dbReference type="STRING" id="155864.Z2704"/>
<dbReference type="GeneID" id="913595"/>
<dbReference type="GeneID" id="93775831"/>
<dbReference type="KEGG" id="ece:Z2704"/>
<dbReference type="KEGG" id="ecs:ECs_2383"/>
<dbReference type="PATRIC" id="fig|386585.9.peg.2496"/>
<dbReference type="eggNOG" id="COG0469">
    <property type="taxonomic scope" value="Bacteria"/>
</dbReference>
<dbReference type="HOGENOM" id="CLU_015439_0_0_6"/>
<dbReference type="OMA" id="HQGRYDR"/>
<dbReference type="BRENDA" id="2.7.1.40">
    <property type="organism ID" value="2026"/>
</dbReference>
<dbReference type="UniPathway" id="UPA00109">
    <property type="reaction ID" value="UER00188"/>
</dbReference>
<dbReference type="EvolutionaryTrace" id="P0AD62"/>
<dbReference type="Proteomes" id="UP000000558">
    <property type="component" value="Chromosome"/>
</dbReference>
<dbReference type="Proteomes" id="UP000002519">
    <property type="component" value="Chromosome"/>
</dbReference>
<dbReference type="GO" id="GO:0005524">
    <property type="term" value="F:ATP binding"/>
    <property type="evidence" value="ECO:0007669"/>
    <property type="project" value="UniProtKB-KW"/>
</dbReference>
<dbReference type="GO" id="GO:0016301">
    <property type="term" value="F:kinase activity"/>
    <property type="evidence" value="ECO:0007669"/>
    <property type="project" value="UniProtKB-KW"/>
</dbReference>
<dbReference type="GO" id="GO:0000287">
    <property type="term" value="F:magnesium ion binding"/>
    <property type="evidence" value="ECO:0007669"/>
    <property type="project" value="InterPro"/>
</dbReference>
<dbReference type="GO" id="GO:0030955">
    <property type="term" value="F:potassium ion binding"/>
    <property type="evidence" value="ECO:0007669"/>
    <property type="project" value="InterPro"/>
</dbReference>
<dbReference type="GO" id="GO:0004743">
    <property type="term" value="F:pyruvate kinase activity"/>
    <property type="evidence" value="ECO:0007669"/>
    <property type="project" value="UniProtKB-EC"/>
</dbReference>
<dbReference type="CDD" id="cd00288">
    <property type="entry name" value="Pyruvate_Kinase"/>
    <property type="match status" value="1"/>
</dbReference>
<dbReference type="FunFam" id="2.40.33.10:FF:000001">
    <property type="entry name" value="Pyruvate kinase"/>
    <property type="match status" value="1"/>
</dbReference>
<dbReference type="FunFam" id="3.20.20.60:FF:000001">
    <property type="entry name" value="Pyruvate kinase"/>
    <property type="match status" value="1"/>
</dbReference>
<dbReference type="FunFam" id="3.40.1380.20:FF:000003">
    <property type="entry name" value="Pyruvate kinase"/>
    <property type="match status" value="1"/>
</dbReference>
<dbReference type="Gene3D" id="3.20.20.60">
    <property type="entry name" value="Phosphoenolpyruvate-binding domains"/>
    <property type="match status" value="1"/>
</dbReference>
<dbReference type="Gene3D" id="2.40.33.10">
    <property type="entry name" value="PK beta-barrel domain-like"/>
    <property type="match status" value="1"/>
</dbReference>
<dbReference type="Gene3D" id="3.40.1380.20">
    <property type="entry name" value="Pyruvate kinase, C-terminal domain"/>
    <property type="match status" value="1"/>
</dbReference>
<dbReference type="InterPro" id="IPR001697">
    <property type="entry name" value="Pyr_Knase"/>
</dbReference>
<dbReference type="InterPro" id="IPR015813">
    <property type="entry name" value="Pyrv/PenolPyrv_kinase-like_dom"/>
</dbReference>
<dbReference type="InterPro" id="IPR040442">
    <property type="entry name" value="Pyrv_kinase-like_dom_sf"/>
</dbReference>
<dbReference type="InterPro" id="IPR011037">
    <property type="entry name" value="Pyrv_Knase-like_insert_dom_sf"/>
</dbReference>
<dbReference type="InterPro" id="IPR018209">
    <property type="entry name" value="Pyrv_Knase_AS"/>
</dbReference>
<dbReference type="InterPro" id="IPR015793">
    <property type="entry name" value="Pyrv_Knase_brl"/>
</dbReference>
<dbReference type="InterPro" id="IPR015795">
    <property type="entry name" value="Pyrv_Knase_C"/>
</dbReference>
<dbReference type="InterPro" id="IPR036918">
    <property type="entry name" value="Pyrv_Knase_C_sf"/>
</dbReference>
<dbReference type="InterPro" id="IPR015806">
    <property type="entry name" value="Pyrv_Knase_insert_dom_sf"/>
</dbReference>
<dbReference type="NCBIfam" id="NF004491">
    <property type="entry name" value="PRK05826.1"/>
    <property type="match status" value="1"/>
</dbReference>
<dbReference type="NCBIfam" id="NF004978">
    <property type="entry name" value="PRK06354.1"/>
    <property type="match status" value="1"/>
</dbReference>
<dbReference type="NCBIfam" id="NF006664">
    <property type="entry name" value="PRK09206.1"/>
    <property type="match status" value="1"/>
</dbReference>
<dbReference type="NCBIfam" id="TIGR01064">
    <property type="entry name" value="pyruv_kin"/>
    <property type="match status" value="1"/>
</dbReference>
<dbReference type="PANTHER" id="PTHR11817">
    <property type="entry name" value="PYRUVATE KINASE"/>
    <property type="match status" value="1"/>
</dbReference>
<dbReference type="Pfam" id="PF00224">
    <property type="entry name" value="PK"/>
    <property type="match status" value="1"/>
</dbReference>
<dbReference type="Pfam" id="PF02887">
    <property type="entry name" value="PK_C"/>
    <property type="match status" value="1"/>
</dbReference>
<dbReference type="PRINTS" id="PR01050">
    <property type="entry name" value="PYRUVTKNASE"/>
</dbReference>
<dbReference type="SUPFAM" id="SSF51621">
    <property type="entry name" value="Phosphoenolpyruvate/pyruvate domain"/>
    <property type="match status" value="1"/>
</dbReference>
<dbReference type="SUPFAM" id="SSF50800">
    <property type="entry name" value="PK beta-barrel domain-like"/>
    <property type="match status" value="1"/>
</dbReference>
<dbReference type="SUPFAM" id="SSF52935">
    <property type="entry name" value="PK C-terminal domain-like"/>
    <property type="match status" value="1"/>
</dbReference>
<dbReference type="PROSITE" id="PS00110">
    <property type="entry name" value="PYRUVATE_KINASE"/>
    <property type="match status" value="1"/>
</dbReference>
<organism>
    <name type="scientific">Escherichia coli O157:H7</name>
    <dbReference type="NCBI Taxonomy" id="83334"/>
    <lineage>
        <taxon>Bacteria</taxon>
        <taxon>Pseudomonadati</taxon>
        <taxon>Pseudomonadota</taxon>
        <taxon>Gammaproteobacteria</taxon>
        <taxon>Enterobacterales</taxon>
        <taxon>Enterobacteriaceae</taxon>
        <taxon>Escherichia</taxon>
    </lineage>
</organism>
<comment type="catalytic activity">
    <reaction>
        <text>pyruvate + ATP = phosphoenolpyruvate + ADP + H(+)</text>
        <dbReference type="Rhea" id="RHEA:18157"/>
        <dbReference type="ChEBI" id="CHEBI:15361"/>
        <dbReference type="ChEBI" id="CHEBI:15378"/>
        <dbReference type="ChEBI" id="CHEBI:30616"/>
        <dbReference type="ChEBI" id="CHEBI:58702"/>
        <dbReference type="ChEBI" id="CHEBI:456216"/>
        <dbReference type="EC" id="2.7.1.40"/>
    </reaction>
</comment>
<comment type="cofactor">
    <cofactor evidence="1">
        <name>Mg(2+)</name>
        <dbReference type="ChEBI" id="CHEBI:18420"/>
    </cofactor>
</comment>
<comment type="cofactor">
    <cofactor evidence="1">
        <name>K(+)</name>
        <dbReference type="ChEBI" id="CHEBI:29103"/>
    </cofactor>
</comment>
<comment type="pathway">
    <text>Carbohydrate degradation; glycolysis; pyruvate from D-glyceraldehyde 3-phosphate: step 5/5.</text>
</comment>
<comment type="subunit">
    <text evidence="1">Homotetramer.</text>
</comment>
<comment type="similarity">
    <text evidence="3">Belongs to the pyruvate kinase family.</text>
</comment>
<keyword id="KW-0007">Acetylation</keyword>
<keyword id="KW-0067">ATP-binding</keyword>
<keyword id="KW-0324">Glycolysis</keyword>
<keyword id="KW-0418">Kinase</keyword>
<keyword id="KW-0460">Magnesium</keyword>
<keyword id="KW-0479">Metal-binding</keyword>
<keyword id="KW-0547">Nucleotide-binding</keyword>
<keyword id="KW-0630">Potassium</keyword>
<keyword id="KW-0670">Pyruvate</keyword>
<keyword id="KW-1185">Reference proteome</keyword>
<keyword id="KW-0808">Transferase</keyword>